<accession>Q2YV20</accession>
<protein>
    <recommendedName>
        <fullName evidence="1">FMN-dependent NADH:quinone oxidoreductase</fullName>
        <ecNumber evidence="1">1.6.5.-</ecNumber>
    </recommendedName>
    <alternativeName>
        <fullName evidence="1">Azo-dye reductase</fullName>
    </alternativeName>
    <alternativeName>
        <fullName evidence="1">FMN-dependent NADH-azo compound oxidoreductase</fullName>
    </alternativeName>
    <alternativeName>
        <fullName evidence="1">FMN-dependent NADH-azoreductase</fullName>
        <ecNumber evidence="1">1.7.1.17</ecNumber>
    </alternativeName>
</protein>
<name>AZOR_STAAB</name>
<organism>
    <name type="scientific">Staphylococcus aureus (strain bovine RF122 / ET3-1)</name>
    <dbReference type="NCBI Taxonomy" id="273036"/>
    <lineage>
        <taxon>Bacteria</taxon>
        <taxon>Bacillati</taxon>
        <taxon>Bacillota</taxon>
        <taxon>Bacilli</taxon>
        <taxon>Bacillales</taxon>
        <taxon>Staphylococcaceae</taxon>
        <taxon>Staphylococcus</taxon>
    </lineage>
</organism>
<dbReference type="EC" id="1.6.5.-" evidence="1"/>
<dbReference type="EC" id="1.7.1.17" evidence="1"/>
<dbReference type="EMBL" id="AJ938182">
    <property type="protein sequence ID" value="CAI79837.1"/>
    <property type="status" value="ALT_INIT"/>
    <property type="molecule type" value="Genomic_DNA"/>
</dbReference>
<dbReference type="RefSeq" id="WP_001151453.1">
    <property type="nucleotide sequence ID" value="NC_007622.1"/>
</dbReference>
<dbReference type="SMR" id="Q2YV20"/>
<dbReference type="KEGG" id="sab:SAB0149c"/>
<dbReference type="HOGENOM" id="CLU_088964_3_1_9"/>
<dbReference type="GO" id="GO:0009055">
    <property type="term" value="F:electron transfer activity"/>
    <property type="evidence" value="ECO:0007669"/>
    <property type="project" value="UniProtKB-UniRule"/>
</dbReference>
<dbReference type="GO" id="GO:0010181">
    <property type="term" value="F:FMN binding"/>
    <property type="evidence" value="ECO:0007669"/>
    <property type="project" value="UniProtKB-UniRule"/>
</dbReference>
<dbReference type="GO" id="GO:0016652">
    <property type="term" value="F:oxidoreductase activity, acting on NAD(P)H as acceptor"/>
    <property type="evidence" value="ECO:0007669"/>
    <property type="project" value="UniProtKB-UniRule"/>
</dbReference>
<dbReference type="GO" id="GO:0016655">
    <property type="term" value="F:oxidoreductase activity, acting on NAD(P)H, quinone or similar compound as acceptor"/>
    <property type="evidence" value="ECO:0007669"/>
    <property type="project" value="InterPro"/>
</dbReference>
<dbReference type="Gene3D" id="3.40.50.360">
    <property type="match status" value="1"/>
</dbReference>
<dbReference type="HAMAP" id="MF_01216">
    <property type="entry name" value="Azoreductase_type1"/>
    <property type="match status" value="1"/>
</dbReference>
<dbReference type="InterPro" id="IPR003680">
    <property type="entry name" value="Flavodoxin_fold"/>
</dbReference>
<dbReference type="InterPro" id="IPR029039">
    <property type="entry name" value="Flavoprotein-like_sf"/>
</dbReference>
<dbReference type="InterPro" id="IPR050104">
    <property type="entry name" value="FMN-dep_NADH:Q_OxRdtase_AzoR1"/>
</dbReference>
<dbReference type="InterPro" id="IPR023048">
    <property type="entry name" value="NADH:quinone_OxRdtase_FMN_depd"/>
</dbReference>
<dbReference type="NCBIfam" id="NF010075">
    <property type="entry name" value="PRK13556.1"/>
    <property type="match status" value="1"/>
</dbReference>
<dbReference type="PANTHER" id="PTHR43741">
    <property type="entry name" value="FMN-DEPENDENT NADH-AZOREDUCTASE 1"/>
    <property type="match status" value="1"/>
</dbReference>
<dbReference type="PANTHER" id="PTHR43741:SF7">
    <property type="entry name" value="FMN-DEPENDENT NADH:QUINONE OXIDOREDUCTASE"/>
    <property type="match status" value="1"/>
</dbReference>
<dbReference type="Pfam" id="PF02525">
    <property type="entry name" value="Flavodoxin_2"/>
    <property type="match status" value="1"/>
</dbReference>
<dbReference type="SUPFAM" id="SSF52218">
    <property type="entry name" value="Flavoproteins"/>
    <property type="match status" value="1"/>
</dbReference>
<reference key="1">
    <citation type="journal article" date="2007" name="PLoS ONE">
        <title>Molecular correlates of host specialization in Staphylococcus aureus.</title>
        <authorList>
            <person name="Herron-Olson L."/>
            <person name="Fitzgerald J.R."/>
            <person name="Musser J.M."/>
            <person name="Kapur V."/>
        </authorList>
    </citation>
    <scope>NUCLEOTIDE SEQUENCE [LARGE SCALE GENOMIC DNA]</scope>
    <source>
        <strain>bovine RF122 / ET3-1</strain>
    </source>
</reference>
<comment type="function">
    <text evidence="1">Quinone reductase that provides resistance to thiol-specific stress caused by electrophilic quinones.</text>
</comment>
<comment type="function">
    <text evidence="1">Also exhibits azoreductase activity. Catalyzes the reductive cleavage of the azo bond in aromatic azo compounds to the corresponding amines.</text>
</comment>
<comment type="catalytic activity">
    <reaction evidence="1">
        <text>2 a quinone + NADH + H(+) = 2 a 1,4-benzosemiquinone + NAD(+)</text>
        <dbReference type="Rhea" id="RHEA:65952"/>
        <dbReference type="ChEBI" id="CHEBI:15378"/>
        <dbReference type="ChEBI" id="CHEBI:57540"/>
        <dbReference type="ChEBI" id="CHEBI:57945"/>
        <dbReference type="ChEBI" id="CHEBI:132124"/>
        <dbReference type="ChEBI" id="CHEBI:134225"/>
    </reaction>
</comment>
<comment type="catalytic activity">
    <reaction evidence="1">
        <text>N,N-dimethyl-1,4-phenylenediamine + anthranilate + 2 NAD(+) = 2-(4-dimethylaminophenyl)diazenylbenzoate + 2 NADH + 2 H(+)</text>
        <dbReference type="Rhea" id="RHEA:55872"/>
        <dbReference type="ChEBI" id="CHEBI:15378"/>
        <dbReference type="ChEBI" id="CHEBI:15783"/>
        <dbReference type="ChEBI" id="CHEBI:16567"/>
        <dbReference type="ChEBI" id="CHEBI:57540"/>
        <dbReference type="ChEBI" id="CHEBI:57945"/>
        <dbReference type="ChEBI" id="CHEBI:71579"/>
        <dbReference type="EC" id="1.7.1.17"/>
    </reaction>
</comment>
<comment type="cofactor">
    <cofactor evidence="1">
        <name>FMN</name>
        <dbReference type="ChEBI" id="CHEBI:58210"/>
    </cofactor>
    <text evidence="1">Binds 1 FMN per subunit.</text>
</comment>
<comment type="subunit">
    <text evidence="1">Homodimer.</text>
</comment>
<comment type="similarity">
    <text evidence="1">Belongs to the azoreductase type 1 family.</text>
</comment>
<comment type="sequence caution" evidence="2">
    <conflict type="erroneous initiation">
        <sequence resource="EMBL-CDS" id="CAI79837"/>
    </conflict>
</comment>
<evidence type="ECO:0000255" key="1">
    <source>
        <dbReference type="HAMAP-Rule" id="MF_01216"/>
    </source>
</evidence>
<evidence type="ECO:0000305" key="2"/>
<sequence>MAKVLYITAHPFNELVSNSMAAGKAFIETYQQQHPDDEVKHIDLFETYIPVIDKDVLTGWGKMSNGETLTDDEQMKVSRLSDILEEFLSADKYVFVTPMWNLSFPPVVKAYIDAISIAGKTFKYSAEGPQGLLTDKKVLHIQSRGGYYTEGPAANFEMGDRYLRTIMTFLGVPSYETIIIEGHNAEPHKTEEIKATSINNAEKLATTF</sequence>
<keyword id="KW-0285">Flavoprotein</keyword>
<keyword id="KW-0288">FMN</keyword>
<keyword id="KW-0520">NAD</keyword>
<keyword id="KW-0560">Oxidoreductase</keyword>
<gene>
    <name evidence="1" type="primary">azoR</name>
    <name type="ordered locus">SAB0149c</name>
</gene>
<feature type="chain" id="PRO_0000245975" description="FMN-dependent NADH:quinone oxidoreductase">
    <location>
        <begin position="1"/>
        <end position="208"/>
    </location>
</feature>
<feature type="binding site" evidence="1">
    <location>
        <begin position="17"/>
        <end position="19"/>
    </location>
    <ligand>
        <name>FMN</name>
        <dbReference type="ChEBI" id="CHEBI:58210"/>
    </ligand>
</feature>
<feature type="binding site" evidence="1">
    <location>
        <begin position="99"/>
        <end position="102"/>
    </location>
    <ligand>
        <name>FMN</name>
        <dbReference type="ChEBI" id="CHEBI:58210"/>
    </ligand>
</feature>
<feature type="binding site" evidence="1">
    <location>
        <begin position="143"/>
        <end position="146"/>
    </location>
    <ligand>
        <name>FMN</name>
        <dbReference type="ChEBI" id="CHEBI:58210"/>
    </ligand>
</feature>
<proteinExistence type="inferred from homology"/>